<dbReference type="EMBL" id="KB644408">
    <property type="protein sequence ID" value="EPS26304.1"/>
    <property type="molecule type" value="Genomic_DNA"/>
</dbReference>
<dbReference type="STRING" id="933388.S7Z806"/>
<dbReference type="eggNOG" id="ENOG502SD7F">
    <property type="taxonomic scope" value="Eukaryota"/>
</dbReference>
<dbReference type="HOGENOM" id="CLU_006524_7_0_1"/>
<dbReference type="OrthoDB" id="10021397at2759"/>
<dbReference type="PhylomeDB" id="S7Z806"/>
<dbReference type="Proteomes" id="UP000019376">
    <property type="component" value="Unassembled WGS sequence"/>
</dbReference>
<dbReference type="GO" id="GO:0005634">
    <property type="term" value="C:nucleus"/>
    <property type="evidence" value="ECO:0007669"/>
    <property type="project" value="UniProtKB-SubCell"/>
</dbReference>
<dbReference type="GO" id="GO:0000981">
    <property type="term" value="F:DNA-binding transcription factor activity, RNA polymerase II-specific"/>
    <property type="evidence" value="ECO:0007669"/>
    <property type="project" value="InterPro"/>
</dbReference>
<dbReference type="GO" id="GO:0000976">
    <property type="term" value="F:transcription cis-regulatory region binding"/>
    <property type="evidence" value="ECO:0007669"/>
    <property type="project" value="TreeGrafter"/>
</dbReference>
<dbReference type="GO" id="GO:0008270">
    <property type="term" value="F:zinc ion binding"/>
    <property type="evidence" value="ECO:0007669"/>
    <property type="project" value="InterPro"/>
</dbReference>
<dbReference type="CDD" id="cd12148">
    <property type="entry name" value="fungal_TF_MHR"/>
    <property type="match status" value="1"/>
</dbReference>
<dbReference type="Gene3D" id="4.10.240.10">
    <property type="entry name" value="Zn(2)-C6 fungal-type DNA-binding domain"/>
    <property type="match status" value="1"/>
</dbReference>
<dbReference type="InterPro" id="IPR051089">
    <property type="entry name" value="prtT"/>
</dbReference>
<dbReference type="InterPro" id="IPR036864">
    <property type="entry name" value="Zn2-C6_fun-type_DNA-bd_sf"/>
</dbReference>
<dbReference type="InterPro" id="IPR001138">
    <property type="entry name" value="Zn2Cys6_DnaBD"/>
</dbReference>
<dbReference type="PANTHER" id="PTHR31845">
    <property type="entry name" value="FINGER DOMAIN PROTEIN, PUTATIVE-RELATED"/>
    <property type="match status" value="1"/>
</dbReference>
<dbReference type="PANTHER" id="PTHR31845:SF32">
    <property type="entry name" value="MISCELLANEOUS ZN(II)2CYS6 TRANSCRIPTION FACTOR (EUROFUNG)-RELATED"/>
    <property type="match status" value="1"/>
</dbReference>
<dbReference type="PROSITE" id="PS00463">
    <property type="entry name" value="ZN2_CY6_FUNGAL_1"/>
    <property type="match status" value="1"/>
</dbReference>
<sequence length="566" mass="63145">MESTMRSPLPYGNACATCARAKCRCVPRNGGRGRCERCHHLNKECRAPQGRRKIQPKTLSRSVQLERKMDGLMSLLTSFGGRTDLPTPVQRQSEVQGMWRTEVESGTEDEETSASEEEYLRAFRTQRLQFLPLIHIPATTTVGDLKLQSPFLWQCISAVESKNTARQATLCVKIRELAGKRLLVDCDKSLDLLQGVLVYLAWITLHSQPHKSSLCMYSQMAIGLVFELGLNKPAPPDLSMTVSNSNAVGHMPGLEASISTRRTMHERRAVLSCFVLTSIIAQFLGRMGPLQWTSHMKQCLDILAESEESPGDRVLVQLTRTRLLVDQISHGPWSEGLYGLNSAQTLATFHLKALQSQLETIRAEIPIQLADNKPILFHLFDTELSLYEAALVKPLADEDFSSQRLDHLYACLRVVKQFFDLFFTIPPAGYTSLALPYIAQVSHCLVILFRLSTLDYPGWDKSTVKNTADILCIAEQISTRMAQVGDAIGMRSEGAYGDPFSKWGMMMQKLRSEWAIRLPDCSEVVVDRSSAESSCPSIEMGDLDCFVNWSELGWVMEGAGAGGFIQ</sequence>
<gene>
    <name evidence="3" type="primary">opdl</name>
    <name type="ORF">PDE_01240</name>
</gene>
<organism>
    <name type="scientific">Penicillium oxalicum (strain 114-2 / CGMCC 5302)</name>
    <name type="common">Penicillium decumbens</name>
    <dbReference type="NCBI Taxonomy" id="933388"/>
    <lineage>
        <taxon>Eukaryota</taxon>
        <taxon>Fungi</taxon>
        <taxon>Dikarya</taxon>
        <taxon>Ascomycota</taxon>
        <taxon>Pezizomycotina</taxon>
        <taxon>Eurotiomycetes</taxon>
        <taxon>Eurotiomycetidae</taxon>
        <taxon>Eurotiales</taxon>
        <taxon>Aspergillaceae</taxon>
        <taxon>Penicillium</taxon>
    </lineage>
</organism>
<comment type="function">
    <text evidence="2">Transcription factor; part of the gene cluster that mediates the biosynthesis of oxopyrrolidines, polyketide-amino acid hybrid compounds with feature structures of tetramic acid.</text>
</comment>
<comment type="subcellular location">
    <subcellularLocation>
        <location evidence="1">Nucleus</location>
    </subcellularLocation>
</comment>
<comment type="disruption phenotype">
    <text evidence="2">Does not affect the production of oxopyrrolidines A and B.</text>
</comment>
<accession>S7Z806</accession>
<evidence type="ECO:0000255" key="1">
    <source>
        <dbReference type="PROSITE-ProRule" id="PRU00227"/>
    </source>
</evidence>
<evidence type="ECO:0000269" key="2">
    <source>
    </source>
</evidence>
<evidence type="ECO:0000303" key="3">
    <source>
    </source>
</evidence>
<feature type="chain" id="PRO_0000457067" description="Transcription factor opdL">
    <location>
        <begin position="1"/>
        <end position="566"/>
    </location>
</feature>
<feature type="DNA-binding region" description="Zn(2)-C6 fungal-type" evidence="1">
    <location>
        <begin position="15"/>
        <end position="45"/>
    </location>
</feature>
<reference key="1">
    <citation type="journal article" date="2013" name="PLoS ONE">
        <title>Genomic and secretomic analyses reveal unique features of the lignocellulolytic enzyme system of Penicillium decumbens.</title>
        <authorList>
            <person name="Liu G."/>
            <person name="Zhang L."/>
            <person name="Wei X."/>
            <person name="Zou G."/>
            <person name="Qin Y."/>
            <person name="Ma L."/>
            <person name="Li J."/>
            <person name="Zheng H."/>
            <person name="Wang S."/>
            <person name="Wang C."/>
            <person name="Xun L."/>
            <person name="Zhao G.-P."/>
            <person name="Zhou Z."/>
            <person name="Qu Y."/>
        </authorList>
    </citation>
    <scope>NUCLEOTIDE SEQUENCE [LARGE SCALE GENOMIC DNA]</scope>
    <source>
        <strain>114-2 / CGMCC 5302</strain>
    </source>
</reference>
<reference key="2">
    <citation type="journal article" date="2022" name="Mar. Drugs">
        <title>Identification of PKS-NRPS Hybrid Metabolites in Marine-Derived Penicillium oxalicum.</title>
        <authorList>
            <person name="Li H."/>
            <person name="Zhang W."/>
            <person name="Zhang X."/>
            <person name="Tang S."/>
            <person name="Men P."/>
            <person name="Xiong M."/>
            <person name="Li Z."/>
            <person name="Zhang Y."/>
            <person name="Huang X."/>
            <person name="Lu X."/>
        </authorList>
    </citation>
    <scope>FUNCTION</scope>
    <scope>DISRUPTION PHENOTYPE</scope>
</reference>
<protein>
    <recommendedName>
        <fullName evidence="3">Transcription factor opdL</fullName>
    </recommendedName>
    <alternativeName>
        <fullName evidence="3">Oxopyrrolidines biosynthesis cluster protein L</fullName>
    </alternativeName>
</protein>
<proteinExistence type="inferred from homology"/>
<name>OPDL_PENO1</name>
<keyword id="KW-0238">DNA-binding</keyword>
<keyword id="KW-0539">Nucleus</keyword>
<keyword id="KW-1185">Reference proteome</keyword>
<keyword id="KW-0804">Transcription</keyword>
<keyword id="KW-0805">Transcription regulation</keyword>